<comment type="function">
    <text evidence="1">Involved in targeting and insertion of nascent membrane proteins into the cytoplasmic membrane. Binds directly to 7S RNA and mediates binding of the 54 kDa subunit of the SRP.</text>
</comment>
<comment type="subunit">
    <text evidence="1">Part of the signal recognition particle protein translocation system, which is composed of SRP and FtsY. Archaeal SRP consists of a 7S RNA molecule of 300 nucleotides and two protein subunits: SRP54 and SRP19.</text>
</comment>
<comment type="subcellular location">
    <subcellularLocation>
        <location evidence="1">Cytoplasm</location>
    </subcellularLocation>
</comment>
<comment type="similarity">
    <text evidence="1">Belongs to the SRP19 family.</text>
</comment>
<protein>
    <recommendedName>
        <fullName evidence="1">Signal recognition particle 19 kDa protein</fullName>
        <shortName evidence="1">SRP19</shortName>
    </recommendedName>
</protein>
<keyword id="KW-0963">Cytoplasm</keyword>
<keyword id="KW-1185">Reference proteome</keyword>
<keyword id="KW-0687">Ribonucleoprotein</keyword>
<keyword id="KW-0694">RNA-binding</keyword>
<keyword id="KW-0733">Signal recognition particle</keyword>
<evidence type="ECO:0000255" key="1">
    <source>
        <dbReference type="HAMAP-Rule" id="MF_00305"/>
    </source>
</evidence>
<name>SRP19_METKA</name>
<dbReference type="EMBL" id="AE009439">
    <property type="protein sequence ID" value="AAM02764.1"/>
    <property type="molecule type" value="Genomic_DNA"/>
</dbReference>
<dbReference type="RefSeq" id="WP_011019919.1">
    <property type="nucleotide sequence ID" value="NC_003551.1"/>
</dbReference>
<dbReference type="SMR" id="Q8TV49"/>
<dbReference type="FunCoup" id="Q8TV49">
    <property type="interactions" value="55"/>
</dbReference>
<dbReference type="STRING" id="190192.MK1551"/>
<dbReference type="PaxDb" id="190192-MK1551"/>
<dbReference type="EnsemblBacteria" id="AAM02764">
    <property type="protein sequence ID" value="AAM02764"/>
    <property type="gene ID" value="MK1551"/>
</dbReference>
<dbReference type="GeneID" id="1478146"/>
<dbReference type="KEGG" id="mka:MK1551"/>
<dbReference type="PATRIC" id="fig|190192.8.peg.1711"/>
<dbReference type="HOGENOM" id="CLU_169299_1_0_2"/>
<dbReference type="InParanoid" id="Q8TV49"/>
<dbReference type="OrthoDB" id="56356at2157"/>
<dbReference type="Proteomes" id="UP000001826">
    <property type="component" value="Chromosome"/>
</dbReference>
<dbReference type="GO" id="GO:0048500">
    <property type="term" value="C:signal recognition particle"/>
    <property type="evidence" value="ECO:0007669"/>
    <property type="project" value="UniProtKB-UniRule"/>
</dbReference>
<dbReference type="GO" id="GO:0008312">
    <property type="term" value="F:7S RNA binding"/>
    <property type="evidence" value="ECO:0007669"/>
    <property type="project" value="UniProtKB-UniRule"/>
</dbReference>
<dbReference type="GO" id="GO:0006617">
    <property type="term" value="P:SRP-dependent cotranslational protein targeting to membrane, signal sequence recognition"/>
    <property type="evidence" value="ECO:0007669"/>
    <property type="project" value="TreeGrafter"/>
</dbReference>
<dbReference type="Gene3D" id="3.30.56.30">
    <property type="entry name" value="Signal recognition particle, SRP19-like subunit"/>
    <property type="match status" value="1"/>
</dbReference>
<dbReference type="HAMAP" id="MF_00305">
    <property type="entry name" value="SRP19"/>
    <property type="match status" value="1"/>
</dbReference>
<dbReference type="InterPro" id="IPR002778">
    <property type="entry name" value="Signal_recog_particle_SRP19"/>
</dbReference>
<dbReference type="InterPro" id="IPR036521">
    <property type="entry name" value="SRP19-like_sf"/>
</dbReference>
<dbReference type="InterPro" id="IPR022938">
    <property type="entry name" value="SRP19_arc-type"/>
</dbReference>
<dbReference type="NCBIfam" id="NF001973">
    <property type="entry name" value="PRK00754.1"/>
    <property type="match status" value="1"/>
</dbReference>
<dbReference type="PANTHER" id="PTHR17453">
    <property type="entry name" value="SIGNAL RECOGNITION PARTICLE 19 KD PROTEIN"/>
    <property type="match status" value="1"/>
</dbReference>
<dbReference type="PANTHER" id="PTHR17453:SF0">
    <property type="entry name" value="SIGNAL RECOGNITION PARTICLE 19 KDA PROTEIN"/>
    <property type="match status" value="1"/>
</dbReference>
<dbReference type="Pfam" id="PF01922">
    <property type="entry name" value="SRP19"/>
    <property type="match status" value="1"/>
</dbReference>
<dbReference type="SUPFAM" id="SSF69695">
    <property type="entry name" value="SRP19"/>
    <property type="match status" value="1"/>
</dbReference>
<reference key="1">
    <citation type="journal article" date="2002" name="Proc. Natl. Acad. Sci. U.S.A.">
        <title>The complete genome of hyperthermophile Methanopyrus kandleri AV19 and monophyly of archaeal methanogens.</title>
        <authorList>
            <person name="Slesarev A.I."/>
            <person name="Mezhevaya K.V."/>
            <person name="Makarova K.S."/>
            <person name="Polushin N.N."/>
            <person name="Shcherbinina O.V."/>
            <person name="Shakhova V.V."/>
            <person name="Belova G.I."/>
            <person name="Aravind L."/>
            <person name="Natale D.A."/>
            <person name="Rogozin I.B."/>
            <person name="Tatusov R.L."/>
            <person name="Wolf Y.I."/>
            <person name="Stetter K.O."/>
            <person name="Malykh A.G."/>
            <person name="Koonin E.V."/>
            <person name="Kozyavkin S.A."/>
        </authorList>
    </citation>
    <scope>NUCLEOTIDE SEQUENCE [LARGE SCALE GENOMIC DNA]</scope>
    <source>
        <strain>AV19 / DSM 6324 / JCM 9639 / NBRC 100938</strain>
    </source>
</reference>
<accession>Q8TV49</accession>
<proteinExistence type="inferred from homology"/>
<organism>
    <name type="scientific">Methanopyrus kandleri (strain AV19 / DSM 6324 / JCM 9639 / NBRC 100938)</name>
    <dbReference type="NCBI Taxonomy" id="190192"/>
    <lineage>
        <taxon>Archaea</taxon>
        <taxon>Methanobacteriati</taxon>
        <taxon>Methanobacteriota</taxon>
        <taxon>Methanomada group</taxon>
        <taxon>Methanopyri</taxon>
        <taxon>Methanopyrales</taxon>
        <taxon>Methanopyraceae</taxon>
        <taxon>Methanopyrus</taxon>
    </lineage>
</organism>
<sequence>MAETPTVKLKGKDRIVVWPAYFDADRSRSEGRKVPKRLAVRNPRLTELRHIAEKLGLNPKVQRDKRYPKRWWDDKGRLIVDKVESKRKTLLMIAEKLKERRES</sequence>
<feature type="chain" id="PRO_0000135218" description="Signal recognition particle 19 kDa protein">
    <location>
        <begin position="1"/>
        <end position="103"/>
    </location>
</feature>
<gene>
    <name evidence="1" type="primary">srp19</name>
    <name type="ordered locus">MK1551</name>
</gene>